<feature type="chain" id="PRO_1000132818" description="ATP-dependent Clp protease adapter protein ClpS">
    <location>
        <begin position="1"/>
        <end position="106"/>
    </location>
</feature>
<reference key="1">
    <citation type="submission" date="2009-02" db="EMBL/GenBank/DDBJ databases">
        <title>Vibrio splendidus str. LGP32 complete genome.</title>
        <authorList>
            <person name="Mazel D."/>
            <person name="Le Roux F."/>
        </authorList>
    </citation>
    <scope>NUCLEOTIDE SEQUENCE [LARGE SCALE GENOMIC DNA]</scope>
    <source>
        <strain>LGP32</strain>
    </source>
</reference>
<comment type="function">
    <text evidence="1">Involved in the modulation of the specificity of the ClpAP-mediated ATP-dependent protein degradation.</text>
</comment>
<comment type="subunit">
    <text evidence="1">Binds to the N-terminal domain of the chaperone ClpA.</text>
</comment>
<comment type="similarity">
    <text evidence="1">Belongs to the ClpS family.</text>
</comment>
<proteinExistence type="inferred from homology"/>
<sequence length="106" mass="12222">MSRNFEWASPGSDLLEKERTKVKPPAMYNVVLHNDDYTPMDFVIEILERFFSLDIEKATEVMLKVHYEGKAICGTYSAEIAETKVAQVTMYSKENEHPLLCTMEQV</sequence>
<gene>
    <name evidence="1" type="primary">clpS</name>
    <name type="ordered locus">VS_1073</name>
</gene>
<protein>
    <recommendedName>
        <fullName evidence="1">ATP-dependent Clp protease adapter protein ClpS</fullName>
    </recommendedName>
</protein>
<accession>B7VM32</accession>
<dbReference type="EMBL" id="FM954972">
    <property type="protein sequence ID" value="CAV18173.1"/>
    <property type="molecule type" value="Genomic_DNA"/>
</dbReference>
<dbReference type="SMR" id="B7VM32"/>
<dbReference type="STRING" id="575788.VS_1073"/>
<dbReference type="KEGG" id="vsp:VS_1073"/>
<dbReference type="eggNOG" id="COG2127">
    <property type="taxonomic scope" value="Bacteria"/>
</dbReference>
<dbReference type="HOGENOM" id="CLU_134358_2_1_6"/>
<dbReference type="Proteomes" id="UP000009100">
    <property type="component" value="Chromosome 1"/>
</dbReference>
<dbReference type="GO" id="GO:0030163">
    <property type="term" value="P:protein catabolic process"/>
    <property type="evidence" value="ECO:0007669"/>
    <property type="project" value="InterPro"/>
</dbReference>
<dbReference type="GO" id="GO:0006508">
    <property type="term" value="P:proteolysis"/>
    <property type="evidence" value="ECO:0007669"/>
    <property type="project" value="UniProtKB-UniRule"/>
</dbReference>
<dbReference type="FunFam" id="3.30.1390.10:FF:000002">
    <property type="entry name" value="ATP-dependent Clp protease adapter protein ClpS"/>
    <property type="match status" value="1"/>
</dbReference>
<dbReference type="Gene3D" id="3.30.1390.10">
    <property type="match status" value="1"/>
</dbReference>
<dbReference type="HAMAP" id="MF_00302">
    <property type="entry name" value="ClpS"/>
    <property type="match status" value="1"/>
</dbReference>
<dbReference type="InterPro" id="IPR022935">
    <property type="entry name" value="ClpS"/>
</dbReference>
<dbReference type="InterPro" id="IPR003769">
    <property type="entry name" value="ClpS_core"/>
</dbReference>
<dbReference type="InterPro" id="IPR014719">
    <property type="entry name" value="Ribosomal_bL12_C/ClpS-like"/>
</dbReference>
<dbReference type="NCBIfam" id="NF000670">
    <property type="entry name" value="PRK00033.1-3"/>
    <property type="match status" value="1"/>
</dbReference>
<dbReference type="NCBIfam" id="NF000672">
    <property type="entry name" value="PRK00033.1-5"/>
    <property type="match status" value="1"/>
</dbReference>
<dbReference type="PANTHER" id="PTHR33473:SF19">
    <property type="entry name" value="ATP-DEPENDENT CLP PROTEASE ADAPTER PROTEIN CLPS"/>
    <property type="match status" value="1"/>
</dbReference>
<dbReference type="PANTHER" id="PTHR33473">
    <property type="entry name" value="ATP-DEPENDENT CLP PROTEASE ADAPTER PROTEIN CLPS1, CHLOROPLASTIC"/>
    <property type="match status" value="1"/>
</dbReference>
<dbReference type="Pfam" id="PF02617">
    <property type="entry name" value="ClpS"/>
    <property type="match status" value="1"/>
</dbReference>
<dbReference type="SUPFAM" id="SSF54736">
    <property type="entry name" value="ClpS-like"/>
    <property type="match status" value="1"/>
</dbReference>
<evidence type="ECO:0000255" key="1">
    <source>
        <dbReference type="HAMAP-Rule" id="MF_00302"/>
    </source>
</evidence>
<name>CLPS_VIBA3</name>
<organism>
    <name type="scientific">Vibrio atlanticus (strain LGP32)</name>
    <name type="common">Vibrio splendidus (strain Mel32)</name>
    <dbReference type="NCBI Taxonomy" id="575788"/>
    <lineage>
        <taxon>Bacteria</taxon>
        <taxon>Pseudomonadati</taxon>
        <taxon>Pseudomonadota</taxon>
        <taxon>Gammaproteobacteria</taxon>
        <taxon>Vibrionales</taxon>
        <taxon>Vibrionaceae</taxon>
        <taxon>Vibrio</taxon>
    </lineage>
</organism>